<accession>Q91XD4</accession>
<gene>
    <name type="primary">Ftcd</name>
</gene>
<feature type="chain" id="PRO_0000087360" description="Formimidoyltransferase-cyclodeaminase">
    <location>
        <begin position="1"/>
        <end position="541"/>
    </location>
</feature>
<feature type="region of interest" description="Formiminotransferase N-subdomain" evidence="1">
    <location>
        <begin position="1"/>
        <end position="181"/>
    </location>
</feature>
<feature type="region of interest" description="Formiminotransferase C-subdomain" evidence="1">
    <location>
        <begin position="182"/>
        <end position="326"/>
    </location>
</feature>
<feature type="region of interest" description="Linker" evidence="1">
    <location>
        <begin position="327"/>
        <end position="334"/>
    </location>
</feature>
<feature type="region of interest" description="Cyclodeaminase/cyclohydrolase" evidence="1">
    <location>
        <begin position="335"/>
        <end position="541"/>
    </location>
</feature>
<feature type="active site" description="For formimidoyltransferase activity" evidence="1">
    <location>
        <position position="82"/>
    </location>
</feature>
<feature type="active site" description="For cyclodeaminase activity" evidence="1">
    <location>
        <position position="412"/>
    </location>
</feature>
<feature type="binding site" evidence="3">
    <location>
        <begin position="163"/>
        <end position="172"/>
    </location>
    <ligand>
        <name>folate</name>
        <dbReference type="ChEBI" id="CHEBI:62501"/>
    </ligand>
</feature>
<feature type="modified residue" description="Phosphoserine" evidence="2">
    <location>
        <position position="520"/>
    </location>
</feature>
<sequence length="541" mass="58939">MSQLVECVPNFSEGNNQEVIDAISRAISQTPGCVLLDVDAGPSTNRTVYTFVGQPECVVEGALHAARTASQLIDMSKHKGEHPRMGALDVCPFIPVRGVSMEECVLCAKAFGQRLAEELNVPVYLYGEAAQTPSRQTLPAIRAGEYEALPEKLKQAEWVPDFGPSSFVPSWGATVTGARKFLIAFNINLLSTKEQAHRIALNLREQGRGKDQPGRLKKVQGIGWYLEEKNLAQVSTNLLDFEVTALHTVFEEARREAQELNLPVVGSQLVGLVPLKALLDAAAFYCDKEKLFVLEEEHRIRLVVNRLGLDSLAPFDPKERIIEYLVPDSGPEQSLLDTSLRGFVREVGARSAAPGGGSVAAAVAALGAALASMVGQMTYGRRQFDHLDSTMRRLIPPFHAASAQLTSLVDADARAFAACLEAIKLPKNTPEERDRRACALQEGLRQAVAVPLKLAETVSQLWPALQELAHCGNLSCLSDLQVAAKALETGVFGAYFNVLINLKDMTDDVFKEKTHHRISSLLQEAKTQAALVLGSLEARKE</sequence>
<name>FTCD_MOUSE</name>
<protein>
    <recommendedName>
        <fullName>Formimidoyltransferase-cyclodeaminase</fullName>
    </recommendedName>
    <alternativeName>
        <fullName>Formiminotransferase-cyclodeaminase</fullName>
        <shortName>FTCD</shortName>
    </alternativeName>
    <domain>
        <recommendedName>
            <fullName>Glutamate formimidoyltransferase</fullName>
            <ecNumber>2.1.2.5</ecNumber>
        </recommendedName>
        <alternativeName>
            <fullName>Glutamate formiminotransferase</fullName>
        </alternativeName>
        <alternativeName>
            <fullName>Glutamate formyltransferase</fullName>
        </alternativeName>
    </domain>
    <domain>
        <recommendedName>
            <fullName>Formimidoyltetrahydrofolate cyclodeaminase</fullName>
            <ecNumber>4.3.1.4</ecNumber>
        </recommendedName>
        <alternativeName>
            <fullName>Formiminotetrahydrofolate cyclodeaminase</fullName>
        </alternativeName>
    </domain>
</protein>
<proteinExistence type="evidence at protein level"/>
<evidence type="ECO:0000250" key="1"/>
<evidence type="ECO:0000250" key="2">
    <source>
        <dbReference type="UniProtKB" id="O88618"/>
    </source>
</evidence>
<evidence type="ECO:0000255" key="3"/>
<evidence type="ECO:0000305" key="4"/>
<dbReference type="EC" id="2.1.2.5"/>
<dbReference type="EC" id="4.3.1.4"/>
<dbReference type="EMBL" id="BC010813">
    <property type="protein sequence ID" value="AAH10813.1"/>
    <property type="molecule type" value="mRNA"/>
</dbReference>
<dbReference type="EMBL" id="BC024078">
    <property type="protein sequence ID" value="AAH24078.1"/>
    <property type="molecule type" value="mRNA"/>
</dbReference>
<dbReference type="CCDS" id="CCDS23950.1"/>
<dbReference type="RefSeq" id="NP_543121.1">
    <property type="nucleotide sequence ID" value="NM_080845.2"/>
</dbReference>
<dbReference type="SMR" id="Q91XD4"/>
<dbReference type="BioGRID" id="199754">
    <property type="interactions" value="1"/>
</dbReference>
<dbReference type="FunCoup" id="Q91XD4">
    <property type="interactions" value="252"/>
</dbReference>
<dbReference type="IntAct" id="Q91XD4">
    <property type="interactions" value="1"/>
</dbReference>
<dbReference type="STRING" id="10090.ENSMUSP00000001183"/>
<dbReference type="GlyGen" id="Q91XD4">
    <property type="glycosylation" value="1 site, 1 O-linked glycan (1 site)"/>
</dbReference>
<dbReference type="iPTMnet" id="Q91XD4"/>
<dbReference type="PhosphoSitePlus" id="Q91XD4"/>
<dbReference type="SwissPalm" id="Q91XD4"/>
<dbReference type="jPOST" id="Q91XD4"/>
<dbReference type="PaxDb" id="10090-ENSMUSP00000001183"/>
<dbReference type="PeptideAtlas" id="Q91XD4"/>
<dbReference type="ProteomicsDB" id="267529"/>
<dbReference type="Antibodypedia" id="4293">
    <property type="antibodies" value="668 antibodies from 38 providers"/>
</dbReference>
<dbReference type="DNASU" id="14317"/>
<dbReference type="Ensembl" id="ENSMUST00000001183.8">
    <property type="protein sequence ID" value="ENSMUSP00000001183.8"/>
    <property type="gene ID" value="ENSMUSG00000001155.14"/>
</dbReference>
<dbReference type="GeneID" id="14317"/>
<dbReference type="KEGG" id="mmu:14317"/>
<dbReference type="UCSC" id="uc007fut.2">
    <property type="organism name" value="mouse"/>
</dbReference>
<dbReference type="AGR" id="MGI:1339962"/>
<dbReference type="CTD" id="10841"/>
<dbReference type="MGI" id="MGI:1339962">
    <property type="gene designation" value="Ftcd"/>
</dbReference>
<dbReference type="VEuPathDB" id="HostDB:ENSMUSG00000001155"/>
<dbReference type="eggNOG" id="ENOG502QQBY">
    <property type="taxonomic scope" value="Eukaryota"/>
</dbReference>
<dbReference type="GeneTree" id="ENSGT00390000005581"/>
<dbReference type="HOGENOM" id="CLU_040037_1_0_1"/>
<dbReference type="InParanoid" id="Q91XD4"/>
<dbReference type="OMA" id="TYGKRQW"/>
<dbReference type="OrthoDB" id="48036at2759"/>
<dbReference type="PhylomeDB" id="Q91XD4"/>
<dbReference type="TreeFam" id="TF333892"/>
<dbReference type="Reactome" id="R-MMU-70921">
    <property type="pathway name" value="Histidine catabolism"/>
</dbReference>
<dbReference type="UniPathway" id="UPA00193"/>
<dbReference type="UniPathway" id="UPA00379">
    <property type="reaction ID" value="UER00555"/>
</dbReference>
<dbReference type="BioGRID-ORCS" id="14317">
    <property type="hits" value="1 hit in 78 CRISPR screens"/>
</dbReference>
<dbReference type="PRO" id="PR:Q91XD4"/>
<dbReference type="Proteomes" id="UP000000589">
    <property type="component" value="Chromosome 10"/>
</dbReference>
<dbReference type="RNAct" id="Q91XD4">
    <property type="molecule type" value="protein"/>
</dbReference>
<dbReference type="Bgee" id="ENSMUSG00000001155">
    <property type="expression patterns" value="Expressed in left lobe of liver and 45 other cell types or tissues"/>
</dbReference>
<dbReference type="GO" id="GO:0005814">
    <property type="term" value="C:centriole"/>
    <property type="evidence" value="ECO:0007669"/>
    <property type="project" value="UniProtKB-SubCell"/>
</dbReference>
<dbReference type="GO" id="GO:0005829">
    <property type="term" value="C:cytosol"/>
    <property type="evidence" value="ECO:0007669"/>
    <property type="project" value="Ensembl"/>
</dbReference>
<dbReference type="GO" id="GO:0005793">
    <property type="term" value="C:endoplasmic reticulum-Golgi intermediate compartment"/>
    <property type="evidence" value="ECO:0007669"/>
    <property type="project" value="Ensembl"/>
</dbReference>
<dbReference type="GO" id="GO:0005794">
    <property type="term" value="C:Golgi apparatus"/>
    <property type="evidence" value="ECO:0000314"/>
    <property type="project" value="MGI"/>
</dbReference>
<dbReference type="GO" id="GO:0000139">
    <property type="term" value="C:Golgi membrane"/>
    <property type="evidence" value="ECO:0007669"/>
    <property type="project" value="Ensembl"/>
</dbReference>
<dbReference type="GO" id="GO:0005886">
    <property type="term" value="C:plasma membrane"/>
    <property type="evidence" value="ECO:0007669"/>
    <property type="project" value="Ensembl"/>
</dbReference>
<dbReference type="GO" id="GO:0030868">
    <property type="term" value="C:smooth endoplasmic reticulum membrane"/>
    <property type="evidence" value="ECO:0007669"/>
    <property type="project" value="Ensembl"/>
</dbReference>
<dbReference type="GO" id="GO:0005542">
    <property type="term" value="F:folic acid binding"/>
    <property type="evidence" value="ECO:0007669"/>
    <property type="project" value="UniProtKB-KW"/>
</dbReference>
<dbReference type="GO" id="GO:0030412">
    <property type="term" value="F:formimidoyltetrahydrofolate cyclodeaminase activity"/>
    <property type="evidence" value="ECO:0000304"/>
    <property type="project" value="MGI"/>
</dbReference>
<dbReference type="GO" id="GO:0030409">
    <property type="term" value="F:glutamate formimidoyltransferase activity"/>
    <property type="evidence" value="ECO:0000304"/>
    <property type="project" value="MGI"/>
</dbReference>
<dbReference type="GO" id="GO:0008017">
    <property type="term" value="F:microtubule binding"/>
    <property type="evidence" value="ECO:0007669"/>
    <property type="project" value="Ensembl"/>
</dbReference>
<dbReference type="GO" id="GO:0007010">
    <property type="term" value="P:cytoskeleton organization"/>
    <property type="evidence" value="ECO:0007669"/>
    <property type="project" value="Ensembl"/>
</dbReference>
<dbReference type="GO" id="GO:0006548">
    <property type="term" value="P:L-histidine catabolic process"/>
    <property type="evidence" value="ECO:0000304"/>
    <property type="project" value="MGI"/>
</dbReference>
<dbReference type="GO" id="GO:0019556">
    <property type="term" value="P:L-histidine catabolic process to glutamate and formamide"/>
    <property type="evidence" value="ECO:0007669"/>
    <property type="project" value="UniProtKB-UniPathway"/>
</dbReference>
<dbReference type="GO" id="GO:0019557">
    <property type="term" value="P:L-histidine catabolic process to glutamate and formate"/>
    <property type="evidence" value="ECO:0007669"/>
    <property type="project" value="UniProtKB-UniPathway"/>
</dbReference>
<dbReference type="GO" id="GO:0035999">
    <property type="term" value="P:tetrahydrofolate interconversion"/>
    <property type="evidence" value="ECO:0007669"/>
    <property type="project" value="UniProtKB-UniPathway"/>
</dbReference>
<dbReference type="FunFam" id="1.20.120.680:FF:000001">
    <property type="entry name" value="Formimidoyltransferase cyclodeaminase"/>
    <property type="match status" value="1"/>
</dbReference>
<dbReference type="FunFam" id="3.30.70.670:FF:000001">
    <property type="entry name" value="Formimidoyltransferase cyclodeaminase"/>
    <property type="match status" value="1"/>
</dbReference>
<dbReference type="FunFam" id="3.30.990.10:FF:000001">
    <property type="entry name" value="Formimidoyltransferase cyclodeaminase"/>
    <property type="match status" value="1"/>
</dbReference>
<dbReference type="Gene3D" id="1.20.120.680">
    <property type="entry name" value="Formiminotetrahydrofolate cyclodeaminase monomer, up-and-down helical bundle"/>
    <property type="match status" value="1"/>
</dbReference>
<dbReference type="Gene3D" id="3.30.70.670">
    <property type="entry name" value="Formiminotransferase, C-terminal subdomain"/>
    <property type="match status" value="1"/>
</dbReference>
<dbReference type="Gene3D" id="3.30.990.10">
    <property type="entry name" value="Formiminotransferase, N-terminal subdomain"/>
    <property type="match status" value="1"/>
</dbReference>
<dbReference type="InterPro" id="IPR007044">
    <property type="entry name" value="Cyclodeamin/CycHdrlase"/>
</dbReference>
<dbReference type="InterPro" id="IPR013802">
    <property type="entry name" value="Formiminotransferase_C"/>
</dbReference>
<dbReference type="InterPro" id="IPR037070">
    <property type="entry name" value="Formiminotransferase_C_sf"/>
</dbReference>
<dbReference type="InterPro" id="IPR004227">
    <property type="entry name" value="Formiminotransferase_cat"/>
</dbReference>
<dbReference type="InterPro" id="IPR012886">
    <property type="entry name" value="Formiminotransferase_N"/>
</dbReference>
<dbReference type="InterPro" id="IPR037064">
    <property type="entry name" value="Formiminotransferase_N_sf"/>
</dbReference>
<dbReference type="InterPro" id="IPR022384">
    <property type="entry name" value="FormiminoTrfase_cat_dom_sf"/>
</dbReference>
<dbReference type="InterPro" id="IPR036178">
    <property type="entry name" value="Formintransfe-cycloase-like_sf"/>
</dbReference>
<dbReference type="InterPro" id="IPR051623">
    <property type="entry name" value="FTCD"/>
</dbReference>
<dbReference type="NCBIfam" id="TIGR02024">
    <property type="entry name" value="FtcD"/>
    <property type="match status" value="1"/>
</dbReference>
<dbReference type="PANTHER" id="PTHR12234:SF0">
    <property type="entry name" value="FORMIMIDOYLTRANSFERASE-CYCLODEAMINASE"/>
    <property type="match status" value="1"/>
</dbReference>
<dbReference type="PANTHER" id="PTHR12234">
    <property type="entry name" value="FORMIMINOTRANSFERASE-CYCLODEAMINASE"/>
    <property type="match status" value="1"/>
</dbReference>
<dbReference type="Pfam" id="PF02971">
    <property type="entry name" value="FTCD"/>
    <property type="match status" value="1"/>
</dbReference>
<dbReference type="Pfam" id="PF04961">
    <property type="entry name" value="FTCD_C"/>
    <property type="match status" value="1"/>
</dbReference>
<dbReference type="Pfam" id="PF07837">
    <property type="entry name" value="FTCD_N"/>
    <property type="match status" value="1"/>
</dbReference>
<dbReference type="SMART" id="SM01221">
    <property type="entry name" value="FTCD"/>
    <property type="match status" value="1"/>
</dbReference>
<dbReference type="SMART" id="SM01222">
    <property type="entry name" value="FTCD_N"/>
    <property type="match status" value="1"/>
</dbReference>
<dbReference type="SUPFAM" id="SSF55116">
    <property type="entry name" value="Formiminotransferase domain of formiminotransferase-cyclodeaminase"/>
    <property type="match status" value="2"/>
</dbReference>
<dbReference type="SUPFAM" id="SSF101262">
    <property type="entry name" value="Methenyltetrahydrofolate cyclohydrolase-like"/>
    <property type="match status" value="1"/>
</dbReference>
<organism>
    <name type="scientific">Mus musculus</name>
    <name type="common">Mouse</name>
    <dbReference type="NCBI Taxonomy" id="10090"/>
    <lineage>
        <taxon>Eukaryota</taxon>
        <taxon>Metazoa</taxon>
        <taxon>Chordata</taxon>
        <taxon>Craniata</taxon>
        <taxon>Vertebrata</taxon>
        <taxon>Euteleostomi</taxon>
        <taxon>Mammalia</taxon>
        <taxon>Eutheria</taxon>
        <taxon>Euarchontoglires</taxon>
        <taxon>Glires</taxon>
        <taxon>Rodentia</taxon>
        <taxon>Myomorpha</taxon>
        <taxon>Muroidea</taxon>
        <taxon>Muridae</taxon>
        <taxon>Murinae</taxon>
        <taxon>Mus</taxon>
        <taxon>Mus</taxon>
    </lineage>
</organism>
<keyword id="KW-0963">Cytoplasm</keyword>
<keyword id="KW-0206">Cytoskeleton</keyword>
<keyword id="KW-0290">Folate-binding</keyword>
<keyword id="KW-0333">Golgi apparatus</keyword>
<keyword id="KW-0369">Histidine metabolism</keyword>
<keyword id="KW-0456">Lyase</keyword>
<keyword id="KW-0511">Multifunctional enzyme</keyword>
<keyword id="KW-0597">Phosphoprotein</keyword>
<keyword id="KW-1185">Reference proteome</keyword>
<keyword id="KW-0808">Transferase</keyword>
<comment type="function">
    <text evidence="1">Folate-dependent enzyme, that displays both transferase and deaminase activity. Serves to channel one-carbon units from formiminoglutamate to the folate pool (By similarity).</text>
</comment>
<comment type="function">
    <text evidence="1">Binds and promotes bundling of vimentin filaments originating from the Golgi.</text>
</comment>
<comment type="catalytic activity">
    <reaction>
        <text>5-formimidoyltetrahydrofolate + L-glutamate = N-formimidoyl-L-glutamate + (6S)-5,6,7,8-tetrahydrofolate</text>
        <dbReference type="Rhea" id="RHEA:15097"/>
        <dbReference type="ChEBI" id="CHEBI:29985"/>
        <dbReference type="ChEBI" id="CHEBI:57453"/>
        <dbReference type="ChEBI" id="CHEBI:57456"/>
        <dbReference type="ChEBI" id="CHEBI:58928"/>
        <dbReference type="EC" id="2.1.2.5"/>
    </reaction>
</comment>
<comment type="catalytic activity">
    <reaction>
        <text>(6S)-5-formyl-5,6,7,8-tetrahydrofolate + L-glutamate = N-formyl-L-glutamate + (6S)-5,6,7,8-tetrahydrofolate + H(+)</text>
        <dbReference type="Rhea" id="RHEA:23240"/>
        <dbReference type="ChEBI" id="CHEBI:15378"/>
        <dbReference type="ChEBI" id="CHEBI:17684"/>
        <dbReference type="ChEBI" id="CHEBI:29985"/>
        <dbReference type="ChEBI" id="CHEBI:57453"/>
        <dbReference type="ChEBI" id="CHEBI:57457"/>
        <dbReference type="EC" id="2.1.2.5"/>
    </reaction>
</comment>
<comment type="catalytic activity">
    <reaction>
        <text>5-formimidoyltetrahydrofolate + 2 H(+) = (6R)-5,10-methenyltetrahydrofolate + NH4(+)</text>
        <dbReference type="Rhea" id="RHEA:22736"/>
        <dbReference type="ChEBI" id="CHEBI:15378"/>
        <dbReference type="ChEBI" id="CHEBI:28938"/>
        <dbReference type="ChEBI" id="CHEBI:57455"/>
        <dbReference type="ChEBI" id="CHEBI:57456"/>
        <dbReference type="EC" id="4.3.1.4"/>
    </reaction>
</comment>
<comment type="pathway">
    <text>Amino-acid degradation; L-histidine degradation into L-glutamate; L-glutamate from N-formimidoyl-L-glutamate (transferase route): step 1/1.</text>
</comment>
<comment type="pathway">
    <text>One-carbon metabolism; tetrahydrofolate interconversion.</text>
</comment>
<comment type="subunit">
    <text evidence="1">Homooctamer, including four polyglutamate binding sites. The subunits are arranged as a tetramer of dimers, and form a planar ring-shaped structure (By similarity).</text>
</comment>
<comment type="subcellular location">
    <subcellularLocation>
        <location evidence="1">Cytoplasm</location>
        <location evidence="1">Cytoskeleton</location>
        <location evidence="1">Microtubule organizing center</location>
        <location evidence="1">Centrosome</location>
        <location evidence="1">Centriole</location>
    </subcellularLocation>
    <subcellularLocation>
        <location evidence="1">Golgi apparatus</location>
    </subcellularLocation>
    <text evidence="1">More abundantly located around the mother centriole.</text>
</comment>
<comment type="similarity">
    <text evidence="4">In the C-terminal section; belongs to the cyclodeaminase/cyclohydrolase family.</text>
</comment>
<comment type="similarity">
    <text evidence="4">In the N-terminal section; belongs to the formiminotransferase family.</text>
</comment>
<reference key="1">
    <citation type="journal article" date="2004" name="Genome Res.">
        <title>The status, quality, and expansion of the NIH full-length cDNA project: the Mammalian Gene Collection (MGC).</title>
        <authorList>
            <consortium name="The MGC Project Team"/>
        </authorList>
    </citation>
    <scope>NUCLEOTIDE SEQUENCE [LARGE SCALE MRNA]</scope>
    <source>
        <tissue>Liver</tissue>
    </source>
</reference>
<reference key="2">
    <citation type="journal article" date="2010" name="Cell">
        <title>A tissue-specific atlas of mouse protein phosphorylation and expression.</title>
        <authorList>
            <person name="Huttlin E.L."/>
            <person name="Jedrychowski M.P."/>
            <person name="Elias J.E."/>
            <person name="Goswami T."/>
            <person name="Rad R."/>
            <person name="Beausoleil S.A."/>
            <person name="Villen J."/>
            <person name="Haas W."/>
            <person name="Sowa M.E."/>
            <person name="Gygi S.P."/>
        </authorList>
    </citation>
    <scope>IDENTIFICATION BY MASS SPECTROMETRY [LARGE SCALE ANALYSIS]</scope>
    <source>
        <tissue>Liver</tissue>
    </source>
</reference>